<feature type="chain" id="PRO_0000093126" description="Chelated iron transport system membrane protein YfeB">
    <location>
        <begin position="1"/>
        <end position="296"/>
    </location>
</feature>
<feature type="domain" description="ABC transporter" evidence="1">
    <location>
        <begin position="11"/>
        <end position="246"/>
    </location>
</feature>
<feature type="region of interest" description="Disordered" evidence="2">
    <location>
        <begin position="276"/>
        <end position="296"/>
    </location>
</feature>
<feature type="compositionally biased region" description="Polar residues" evidence="2">
    <location>
        <begin position="286"/>
        <end position="296"/>
    </location>
</feature>
<feature type="binding site" evidence="1">
    <location>
        <begin position="44"/>
        <end position="51"/>
    </location>
    <ligand>
        <name>ATP</name>
        <dbReference type="ChEBI" id="CHEBI:30616"/>
    </ligand>
</feature>
<name>YFEB_YERPE</name>
<accession>Q56953</accession>
<accession>Q0WE84</accession>
<dbReference type="EMBL" id="U50597">
    <property type="protein sequence ID" value="AAC46148.1"/>
    <property type="molecule type" value="Genomic_DNA"/>
</dbReference>
<dbReference type="EMBL" id="AL590842">
    <property type="protein sequence ID" value="CAL21068.1"/>
    <property type="molecule type" value="Genomic_DNA"/>
</dbReference>
<dbReference type="EMBL" id="AE009952">
    <property type="protein sequence ID" value="AAM85463.1"/>
    <property type="molecule type" value="Genomic_DNA"/>
</dbReference>
<dbReference type="EMBL" id="AE017042">
    <property type="protein sequence ID" value="AAS62434.1"/>
    <property type="molecule type" value="Genomic_DNA"/>
</dbReference>
<dbReference type="PIR" id="AI0297">
    <property type="entry name" value="AI0297"/>
</dbReference>
<dbReference type="RefSeq" id="WP_002211843.1">
    <property type="nucleotide sequence ID" value="NZ_WUCM01000025.1"/>
</dbReference>
<dbReference type="RefSeq" id="YP_002347404.1">
    <property type="nucleotide sequence ID" value="NC_003143.1"/>
</dbReference>
<dbReference type="SMR" id="Q56953"/>
<dbReference type="STRING" id="214092.YPO2440"/>
<dbReference type="TCDB" id="3.A.1.15.4">
    <property type="family name" value="the atp-binding cassette (abc) superfamily"/>
</dbReference>
<dbReference type="PaxDb" id="214092-YPO2440"/>
<dbReference type="DNASU" id="1146843"/>
<dbReference type="EnsemblBacteria" id="AAS62434">
    <property type="protein sequence ID" value="AAS62434"/>
    <property type="gene ID" value="YP_2228"/>
</dbReference>
<dbReference type="GeneID" id="57976239"/>
<dbReference type="KEGG" id="ype:YPO2440"/>
<dbReference type="KEGG" id="ypk:y1896"/>
<dbReference type="KEGG" id="ypm:YP_2228"/>
<dbReference type="PATRIC" id="fig|214092.21.peg.2851"/>
<dbReference type="eggNOG" id="COG1121">
    <property type="taxonomic scope" value="Bacteria"/>
</dbReference>
<dbReference type="HOGENOM" id="CLU_000604_1_11_6"/>
<dbReference type="OMA" id="SVWDVVM"/>
<dbReference type="OrthoDB" id="9806726at2"/>
<dbReference type="Proteomes" id="UP000000815">
    <property type="component" value="Chromosome"/>
</dbReference>
<dbReference type="Proteomes" id="UP000001019">
    <property type="component" value="Chromosome"/>
</dbReference>
<dbReference type="Proteomes" id="UP000002490">
    <property type="component" value="Chromosome"/>
</dbReference>
<dbReference type="GO" id="GO:0043190">
    <property type="term" value="C:ATP-binding cassette (ABC) transporter complex"/>
    <property type="evidence" value="ECO:0000318"/>
    <property type="project" value="GO_Central"/>
</dbReference>
<dbReference type="GO" id="GO:0005524">
    <property type="term" value="F:ATP binding"/>
    <property type="evidence" value="ECO:0007669"/>
    <property type="project" value="UniProtKB-KW"/>
</dbReference>
<dbReference type="GO" id="GO:0016887">
    <property type="term" value="F:ATP hydrolysis activity"/>
    <property type="evidence" value="ECO:0007669"/>
    <property type="project" value="InterPro"/>
</dbReference>
<dbReference type="GO" id="GO:0042626">
    <property type="term" value="F:ATPase-coupled transmembrane transporter activity"/>
    <property type="evidence" value="ECO:0000318"/>
    <property type="project" value="GO_Central"/>
</dbReference>
<dbReference type="GO" id="GO:0071281">
    <property type="term" value="P:cellular response to iron ion"/>
    <property type="evidence" value="ECO:0000269"/>
    <property type="project" value="CollecTF"/>
</dbReference>
<dbReference type="GO" id="GO:0006826">
    <property type="term" value="P:iron ion transport"/>
    <property type="evidence" value="ECO:0007669"/>
    <property type="project" value="UniProtKB-KW"/>
</dbReference>
<dbReference type="CDD" id="cd03235">
    <property type="entry name" value="ABC_Metallic_Cations"/>
    <property type="match status" value="1"/>
</dbReference>
<dbReference type="FunFam" id="3.40.50.300:FF:002165">
    <property type="entry name" value="Manganese/iron ABC transporter ATP-binding protein"/>
    <property type="match status" value="1"/>
</dbReference>
<dbReference type="Gene3D" id="3.40.50.300">
    <property type="entry name" value="P-loop containing nucleotide triphosphate hydrolases"/>
    <property type="match status" value="1"/>
</dbReference>
<dbReference type="InterPro" id="IPR003593">
    <property type="entry name" value="AAA+_ATPase"/>
</dbReference>
<dbReference type="InterPro" id="IPR003439">
    <property type="entry name" value="ABC_transporter-like_ATP-bd"/>
</dbReference>
<dbReference type="InterPro" id="IPR017871">
    <property type="entry name" value="ABC_transporter-like_CS"/>
</dbReference>
<dbReference type="InterPro" id="IPR050153">
    <property type="entry name" value="Metal_Ion_Import_ABC"/>
</dbReference>
<dbReference type="InterPro" id="IPR027417">
    <property type="entry name" value="P-loop_NTPase"/>
</dbReference>
<dbReference type="NCBIfam" id="NF011630">
    <property type="entry name" value="PRK15056.1"/>
    <property type="match status" value="1"/>
</dbReference>
<dbReference type="PANTHER" id="PTHR42734:SF5">
    <property type="entry name" value="IRON TRANSPORT SYSTEM ATP-BINDING PROTEIN HI_0361-RELATED"/>
    <property type="match status" value="1"/>
</dbReference>
<dbReference type="PANTHER" id="PTHR42734">
    <property type="entry name" value="METAL TRANSPORT SYSTEM ATP-BINDING PROTEIN TM_0124-RELATED"/>
    <property type="match status" value="1"/>
</dbReference>
<dbReference type="Pfam" id="PF00005">
    <property type="entry name" value="ABC_tran"/>
    <property type="match status" value="1"/>
</dbReference>
<dbReference type="SMART" id="SM00382">
    <property type="entry name" value="AAA"/>
    <property type="match status" value="1"/>
</dbReference>
<dbReference type="SUPFAM" id="SSF52540">
    <property type="entry name" value="P-loop containing nucleoside triphosphate hydrolases"/>
    <property type="match status" value="1"/>
</dbReference>
<dbReference type="PROSITE" id="PS00211">
    <property type="entry name" value="ABC_TRANSPORTER_1"/>
    <property type="match status" value="1"/>
</dbReference>
<dbReference type="PROSITE" id="PS50893">
    <property type="entry name" value="ABC_TRANSPORTER_2"/>
    <property type="match status" value="1"/>
</dbReference>
<protein>
    <recommendedName>
        <fullName>Chelated iron transport system membrane protein YfeB</fullName>
    </recommendedName>
</protein>
<sequence length="296" mass="32396">MSHPVFVRPELVVDNVTVTYNNGHTAIYDASFSLTGGTICALVGVNGSGKSTLFKSIMGLVKPSVGKVELSHKPISHALKQNTIAYVPQTEDVDWNFPVLVEDVVMMGRYGKMNFLRIPSREDKAIVNKSIERVGLTALRSRQIGELSGGQKKRVFLARALAQQGTLLLLDEPFTGVDVKTENAIIELLQSLRDEGHLILVSTHNLGSVPEFCDHVILINQTVLAAGPIETTFTQKNLEMTFGGVLRHINLSGTALHDDNDPRTVTVITDDERPAVFYGHTKNDPPAQSQSKEQNS</sequence>
<proteinExistence type="inferred from homology"/>
<comment type="function">
    <text>Part of an ATP-driven transport system YfeABCD for chelated iron.</text>
</comment>
<comment type="subcellular location">
    <subcellularLocation>
        <location evidence="3">Cell inner membrane</location>
        <topology evidence="3">Peripheral membrane protein</topology>
    </subcellularLocation>
</comment>
<comment type="similarity">
    <text evidence="3">Belongs to the ABC transporter superfamily.</text>
</comment>
<gene>
    <name type="primary">yfeB</name>
    <name type="ordered locus">YPO2440</name>
    <name type="ordered locus">y1896</name>
    <name type="ordered locus">YP_2228</name>
</gene>
<keyword id="KW-0067">ATP-binding</keyword>
<keyword id="KW-0997">Cell inner membrane</keyword>
<keyword id="KW-1003">Cell membrane</keyword>
<keyword id="KW-0406">Ion transport</keyword>
<keyword id="KW-0408">Iron</keyword>
<keyword id="KW-0410">Iron transport</keyword>
<keyword id="KW-0472">Membrane</keyword>
<keyword id="KW-0547">Nucleotide-binding</keyword>
<keyword id="KW-1185">Reference proteome</keyword>
<keyword id="KW-0813">Transport</keyword>
<organism>
    <name type="scientific">Yersinia pestis</name>
    <dbReference type="NCBI Taxonomy" id="632"/>
    <lineage>
        <taxon>Bacteria</taxon>
        <taxon>Pseudomonadati</taxon>
        <taxon>Pseudomonadota</taxon>
        <taxon>Gammaproteobacteria</taxon>
        <taxon>Enterobacterales</taxon>
        <taxon>Yersiniaceae</taxon>
        <taxon>Yersinia</taxon>
    </lineage>
</organism>
<evidence type="ECO:0000255" key="1">
    <source>
        <dbReference type="PROSITE-ProRule" id="PRU00434"/>
    </source>
</evidence>
<evidence type="ECO:0000256" key="2">
    <source>
        <dbReference type="SAM" id="MobiDB-lite"/>
    </source>
</evidence>
<evidence type="ECO:0000305" key="3"/>
<reference key="1">
    <citation type="journal article" date="1998" name="J. Bacteriol.">
        <title>An ABC transporter system of Yersinia pestis allows utilization of chelated iron by Escherichia coli SAB11.</title>
        <authorList>
            <person name="Bearden S.W."/>
            <person name="Staggs T.M."/>
            <person name="Perry R.D."/>
        </authorList>
    </citation>
    <scope>NUCLEOTIDE SEQUENCE [GENOMIC DNA]</scope>
    <source>
        <strain>KIM6</strain>
    </source>
</reference>
<reference key="2">
    <citation type="journal article" date="2001" name="Nature">
        <title>Genome sequence of Yersinia pestis, the causative agent of plague.</title>
        <authorList>
            <person name="Parkhill J."/>
            <person name="Wren B.W."/>
            <person name="Thomson N.R."/>
            <person name="Titball R.W."/>
            <person name="Holden M.T.G."/>
            <person name="Prentice M.B."/>
            <person name="Sebaihia M."/>
            <person name="James K.D."/>
            <person name="Churcher C.M."/>
            <person name="Mungall K.L."/>
            <person name="Baker S."/>
            <person name="Basham D."/>
            <person name="Bentley S.D."/>
            <person name="Brooks K."/>
            <person name="Cerdeno-Tarraga A.-M."/>
            <person name="Chillingworth T."/>
            <person name="Cronin A."/>
            <person name="Davies R.M."/>
            <person name="Davis P."/>
            <person name="Dougan G."/>
            <person name="Feltwell T."/>
            <person name="Hamlin N."/>
            <person name="Holroyd S."/>
            <person name="Jagels K."/>
            <person name="Karlyshev A.V."/>
            <person name="Leather S."/>
            <person name="Moule S."/>
            <person name="Oyston P.C.F."/>
            <person name="Quail M.A."/>
            <person name="Rutherford K.M."/>
            <person name="Simmonds M."/>
            <person name="Skelton J."/>
            <person name="Stevens K."/>
            <person name="Whitehead S."/>
            <person name="Barrell B.G."/>
        </authorList>
    </citation>
    <scope>NUCLEOTIDE SEQUENCE [LARGE SCALE GENOMIC DNA]</scope>
    <source>
        <strain>CO-92 / Biovar Orientalis</strain>
    </source>
</reference>
<reference key="3">
    <citation type="journal article" date="2002" name="J. Bacteriol.">
        <title>Genome sequence of Yersinia pestis KIM.</title>
        <authorList>
            <person name="Deng W."/>
            <person name="Burland V."/>
            <person name="Plunkett G. III"/>
            <person name="Boutin A."/>
            <person name="Mayhew G.F."/>
            <person name="Liss P."/>
            <person name="Perna N.T."/>
            <person name="Rose D.J."/>
            <person name="Mau B."/>
            <person name="Zhou S."/>
            <person name="Schwartz D.C."/>
            <person name="Fetherston J.D."/>
            <person name="Lindler L.E."/>
            <person name="Brubaker R.R."/>
            <person name="Plano G.V."/>
            <person name="Straley S.C."/>
            <person name="McDonough K.A."/>
            <person name="Nilles M.L."/>
            <person name="Matson J.S."/>
            <person name="Blattner F.R."/>
            <person name="Perry R.D."/>
        </authorList>
    </citation>
    <scope>NUCLEOTIDE SEQUENCE [LARGE SCALE GENOMIC DNA]</scope>
    <source>
        <strain>KIM10+ / Biovar Mediaevalis</strain>
    </source>
</reference>
<reference key="4">
    <citation type="journal article" date="2004" name="DNA Res.">
        <title>Complete genome sequence of Yersinia pestis strain 91001, an isolate avirulent to humans.</title>
        <authorList>
            <person name="Song Y."/>
            <person name="Tong Z."/>
            <person name="Wang J."/>
            <person name="Wang L."/>
            <person name="Guo Z."/>
            <person name="Han Y."/>
            <person name="Zhang J."/>
            <person name="Pei D."/>
            <person name="Zhou D."/>
            <person name="Qin H."/>
            <person name="Pang X."/>
            <person name="Han Y."/>
            <person name="Zhai J."/>
            <person name="Li M."/>
            <person name="Cui B."/>
            <person name="Qi Z."/>
            <person name="Jin L."/>
            <person name="Dai R."/>
            <person name="Chen F."/>
            <person name="Li S."/>
            <person name="Ye C."/>
            <person name="Du Z."/>
            <person name="Lin W."/>
            <person name="Wang J."/>
            <person name="Yu J."/>
            <person name="Yang H."/>
            <person name="Wang J."/>
            <person name="Huang P."/>
            <person name="Yang R."/>
        </authorList>
    </citation>
    <scope>NUCLEOTIDE SEQUENCE [LARGE SCALE GENOMIC DNA]</scope>
    <source>
        <strain>91001 / Biovar Mediaevalis</strain>
    </source>
</reference>